<evidence type="ECO:0000255" key="1">
    <source>
        <dbReference type="HAMAP-Rule" id="MF_01382"/>
    </source>
</evidence>
<feature type="chain" id="PRO_1000145035" description="Protein translocase subunit SecA">
    <location>
        <begin position="1"/>
        <end position="916"/>
    </location>
</feature>
<feature type="binding site" evidence="1">
    <location>
        <position position="87"/>
    </location>
    <ligand>
        <name>ATP</name>
        <dbReference type="ChEBI" id="CHEBI:30616"/>
    </ligand>
</feature>
<feature type="binding site" evidence="1">
    <location>
        <begin position="105"/>
        <end position="109"/>
    </location>
    <ligand>
        <name>ATP</name>
        <dbReference type="ChEBI" id="CHEBI:30616"/>
    </ligand>
</feature>
<feature type="binding site" evidence="1">
    <location>
        <position position="507"/>
    </location>
    <ligand>
        <name>ATP</name>
        <dbReference type="ChEBI" id="CHEBI:30616"/>
    </ligand>
</feature>
<feature type="binding site" evidence="1">
    <location>
        <position position="900"/>
    </location>
    <ligand>
        <name>Zn(2+)</name>
        <dbReference type="ChEBI" id="CHEBI:29105"/>
    </ligand>
</feature>
<feature type="binding site" evidence="1">
    <location>
        <position position="902"/>
    </location>
    <ligand>
        <name>Zn(2+)</name>
        <dbReference type="ChEBI" id="CHEBI:29105"/>
    </ligand>
</feature>
<feature type="binding site" evidence="1">
    <location>
        <position position="911"/>
    </location>
    <ligand>
        <name>Zn(2+)</name>
        <dbReference type="ChEBI" id="CHEBI:29105"/>
    </ligand>
</feature>
<feature type="binding site" evidence="1">
    <location>
        <position position="912"/>
    </location>
    <ligand>
        <name>Zn(2+)</name>
        <dbReference type="ChEBI" id="CHEBI:29105"/>
    </ligand>
</feature>
<comment type="function">
    <text evidence="1">Part of the Sec protein translocase complex. Interacts with the SecYEG preprotein conducting channel. Has a central role in coupling the hydrolysis of ATP to the transfer of proteins into and across the cell membrane, serving both as a receptor for the preprotein-SecB complex and as an ATP-driven molecular motor driving the stepwise translocation of polypeptide chains across the membrane.</text>
</comment>
<comment type="catalytic activity">
    <reaction evidence="1">
        <text>ATP + H2O + cellular proteinSide 1 = ADP + phosphate + cellular proteinSide 2.</text>
        <dbReference type="EC" id="7.4.2.8"/>
    </reaction>
</comment>
<comment type="cofactor">
    <cofactor evidence="1">
        <name>Zn(2+)</name>
        <dbReference type="ChEBI" id="CHEBI:29105"/>
    </cofactor>
    <text evidence="1">May bind 1 zinc ion per subunit.</text>
</comment>
<comment type="subunit">
    <text evidence="1">Monomer and homodimer. Part of the essential Sec protein translocation apparatus which comprises SecA, SecYEG and auxiliary proteins SecDF-YajC and YidC.</text>
</comment>
<comment type="subcellular location">
    <subcellularLocation>
        <location evidence="1">Cell inner membrane</location>
        <topology evidence="1">Peripheral membrane protein</topology>
        <orientation evidence="1">Cytoplasmic side</orientation>
    </subcellularLocation>
    <subcellularLocation>
        <location evidence="1">Cytoplasm</location>
    </subcellularLocation>
    <text evidence="1">Distribution is 50-50.</text>
</comment>
<comment type="similarity">
    <text evidence="1">Belongs to the SecA family.</text>
</comment>
<sequence length="916" mass="103237">MLTNIAKKIFGSRNDRLLKQYRKSVARINALEEQMQALSDADLQAKTAEFKQRLADGQTLDGILPEAFAVCREASRRVLGMRHFDVQLIGGMVLHDGKIAEMRTGEGKTLVATLAVYLNALAGKGVHVVTVNDYLASRDAGIMEPLYNFLGLTVGVIISDMQPFDRQNAYAADITYGTNNEFGFDYLRDNMVTDQYDKVQRELNFAVVDEVDSILIDEARTPLIISGQADDNIQLYQIMNTVPPHLVRQETEEGEGDYWVDEKAHQVILSETGHEHAEQILTQMGLLAENDSLYSAANISLMHHLMAALRAHSLFHKDQHYVIQDGEIVIVDEFTGRLMSGRRWSEGLHQAVEAKEGVEIKRENQTLASITFQNYFRLYTKLSGMTGTADTEAFEFQSIYNLETVIIPTNRPVQRKDFNDQIFRSAEEKFEAVVKDIEECHKRGQPVLVGTTSIENSELVSRLLQKAGLPHNVLNAKEHEREALIVAQAGKVGAITVATNMAGRGTDIVLGGNLKHQTDAIRADETLSDEEKQAQIAALENGWQAEHDKVMEAGGLHIIGTERHESRRIDNQLRGRSGRQGDPGSSRFYLSFEDPLLRLFALDRAAAILNRLAPERGVAIEHNLLTRQIEGAQRKVEGRNFDMRKQVLEYDDVANEQRKVIYSQRNEILTSKDIGDLMQEIRSDAVSDLVDTYMPPDSMEEQWDIPTLENRLAAEFRLQEDIQSWLKADNAIDGQDIKERLIERIENEYAAKTELVGKQAMADFERNVMLQAIDNQWREHLAAMDYLRQGIHLRSYAQKNPKQEYKREAFTMFQDLWNGIKFHIASLLTSVQIEQNPVAAVEEQPVGNIQSIHSESPDIEELLGQSQTDLVTEAFNPDGTDFSPEALEARGQIVHRNDPCPCGSGLKYKQCHGKLA</sequence>
<protein>
    <recommendedName>
        <fullName evidence="1">Protein translocase subunit SecA</fullName>
        <ecNumber evidence="1">7.4.2.8</ecNumber>
    </recommendedName>
</protein>
<organism>
    <name type="scientific">Neisseria gonorrhoeae (strain NCCP11945)</name>
    <dbReference type="NCBI Taxonomy" id="521006"/>
    <lineage>
        <taxon>Bacteria</taxon>
        <taxon>Pseudomonadati</taxon>
        <taxon>Pseudomonadota</taxon>
        <taxon>Betaproteobacteria</taxon>
        <taxon>Neisseriales</taxon>
        <taxon>Neisseriaceae</taxon>
        <taxon>Neisseria</taxon>
    </lineage>
</organism>
<reference key="1">
    <citation type="journal article" date="2008" name="J. Bacteriol.">
        <title>Complete genome sequence of Neisseria gonorrhoeae NCCP11945.</title>
        <authorList>
            <person name="Chung G.T."/>
            <person name="Yoo J.S."/>
            <person name="Oh H.B."/>
            <person name="Lee Y.S."/>
            <person name="Cha S.H."/>
            <person name="Kim S.J."/>
            <person name="Yoo C.K."/>
        </authorList>
    </citation>
    <scope>NUCLEOTIDE SEQUENCE [LARGE SCALE GENOMIC DNA]</scope>
    <source>
        <strain>NCCP11945</strain>
    </source>
</reference>
<proteinExistence type="inferred from homology"/>
<name>SECA_NEIG2</name>
<keyword id="KW-0067">ATP-binding</keyword>
<keyword id="KW-0997">Cell inner membrane</keyword>
<keyword id="KW-1003">Cell membrane</keyword>
<keyword id="KW-0963">Cytoplasm</keyword>
<keyword id="KW-0472">Membrane</keyword>
<keyword id="KW-0479">Metal-binding</keyword>
<keyword id="KW-0547">Nucleotide-binding</keyword>
<keyword id="KW-0653">Protein transport</keyword>
<keyword id="KW-1278">Translocase</keyword>
<keyword id="KW-0811">Translocation</keyword>
<keyword id="KW-0813">Transport</keyword>
<keyword id="KW-0862">Zinc</keyword>
<accession>B4RKY2</accession>
<dbReference type="EC" id="7.4.2.8" evidence="1"/>
<dbReference type="EMBL" id="CP001050">
    <property type="protein sequence ID" value="ACF29473.1"/>
    <property type="molecule type" value="Genomic_DNA"/>
</dbReference>
<dbReference type="RefSeq" id="WP_003688267.1">
    <property type="nucleotide sequence ID" value="NC_011035.1"/>
</dbReference>
<dbReference type="SMR" id="B4RKY2"/>
<dbReference type="GeneID" id="66753318"/>
<dbReference type="KEGG" id="ngk:NGK_0792"/>
<dbReference type="HOGENOM" id="CLU_005314_3_0_4"/>
<dbReference type="Proteomes" id="UP000002564">
    <property type="component" value="Chromosome"/>
</dbReference>
<dbReference type="GO" id="GO:0031522">
    <property type="term" value="C:cell envelope Sec protein transport complex"/>
    <property type="evidence" value="ECO:0007669"/>
    <property type="project" value="TreeGrafter"/>
</dbReference>
<dbReference type="GO" id="GO:0005829">
    <property type="term" value="C:cytosol"/>
    <property type="evidence" value="ECO:0007669"/>
    <property type="project" value="TreeGrafter"/>
</dbReference>
<dbReference type="GO" id="GO:0005886">
    <property type="term" value="C:plasma membrane"/>
    <property type="evidence" value="ECO:0007669"/>
    <property type="project" value="UniProtKB-SubCell"/>
</dbReference>
<dbReference type="GO" id="GO:0005524">
    <property type="term" value="F:ATP binding"/>
    <property type="evidence" value="ECO:0007669"/>
    <property type="project" value="UniProtKB-UniRule"/>
</dbReference>
<dbReference type="GO" id="GO:0046872">
    <property type="term" value="F:metal ion binding"/>
    <property type="evidence" value="ECO:0007669"/>
    <property type="project" value="UniProtKB-KW"/>
</dbReference>
<dbReference type="GO" id="GO:0008564">
    <property type="term" value="F:protein-exporting ATPase activity"/>
    <property type="evidence" value="ECO:0007669"/>
    <property type="project" value="UniProtKB-EC"/>
</dbReference>
<dbReference type="GO" id="GO:0065002">
    <property type="term" value="P:intracellular protein transmembrane transport"/>
    <property type="evidence" value="ECO:0007669"/>
    <property type="project" value="UniProtKB-UniRule"/>
</dbReference>
<dbReference type="GO" id="GO:0017038">
    <property type="term" value="P:protein import"/>
    <property type="evidence" value="ECO:0007669"/>
    <property type="project" value="InterPro"/>
</dbReference>
<dbReference type="GO" id="GO:0006605">
    <property type="term" value="P:protein targeting"/>
    <property type="evidence" value="ECO:0007669"/>
    <property type="project" value="UniProtKB-UniRule"/>
</dbReference>
<dbReference type="GO" id="GO:0043952">
    <property type="term" value="P:protein transport by the Sec complex"/>
    <property type="evidence" value="ECO:0007669"/>
    <property type="project" value="TreeGrafter"/>
</dbReference>
<dbReference type="CDD" id="cd17928">
    <property type="entry name" value="DEXDc_SecA"/>
    <property type="match status" value="1"/>
</dbReference>
<dbReference type="CDD" id="cd18803">
    <property type="entry name" value="SF2_C_secA"/>
    <property type="match status" value="1"/>
</dbReference>
<dbReference type="FunFam" id="3.40.50.300:FF:000081">
    <property type="entry name" value="Preprotein translocase subunit SecA"/>
    <property type="match status" value="1"/>
</dbReference>
<dbReference type="FunFam" id="3.40.50.300:FF:000113">
    <property type="entry name" value="Preprotein translocase subunit SecA"/>
    <property type="match status" value="1"/>
</dbReference>
<dbReference type="FunFam" id="3.90.1440.10:FF:000001">
    <property type="entry name" value="Preprotein translocase subunit SecA"/>
    <property type="match status" value="1"/>
</dbReference>
<dbReference type="FunFam" id="1.10.3060.10:FF:000003">
    <property type="entry name" value="Protein translocase subunit SecA"/>
    <property type="match status" value="1"/>
</dbReference>
<dbReference type="Gene3D" id="1.10.3060.10">
    <property type="entry name" value="Helical scaffold and wing domains of SecA"/>
    <property type="match status" value="1"/>
</dbReference>
<dbReference type="Gene3D" id="3.40.50.300">
    <property type="entry name" value="P-loop containing nucleotide triphosphate hydrolases"/>
    <property type="match status" value="2"/>
</dbReference>
<dbReference type="Gene3D" id="3.90.1440.10">
    <property type="entry name" value="SecA, preprotein cross-linking domain"/>
    <property type="match status" value="1"/>
</dbReference>
<dbReference type="HAMAP" id="MF_01382">
    <property type="entry name" value="SecA"/>
    <property type="match status" value="1"/>
</dbReference>
<dbReference type="InterPro" id="IPR014001">
    <property type="entry name" value="Helicase_ATP-bd"/>
</dbReference>
<dbReference type="InterPro" id="IPR001650">
    <property type="entry name" value="Helicase_C-like"/>
</dbReference>
<dbReference type="InterPro" id="IPR027417">
    <property type="entry name" value="P-loop_NTPase"/>
</dbReference>
<dbReference type="InterPro" id="IPR004027">
    <property type="entry name" value="SEC_C_motif"/>
</dbReference>
<dbReference type="InterPro" id="IPR000185">
    <property type="entry name" value="SecA"/>
</dbReference>
<dbReference type="InterPro" id="IPR020937">
    <property type="entry name" value="SecA_CS"/>
</dbReference>
<dbReference type="InterPro" id="IPR011115">
    <property type="entry name" value="SecA_DEAD"/>
</dbReference>
<dbReference type="InterPro" id="IPR014018">
    <property type="entry name" value="SecA_motor_DEAD"/>
</dbReference>
<dbReference type="InterPro" id="IPR011130">
    <property type="entry name" value="SecA_preprotein_X-link_dom"/>
</dbReference>
<dbReference type="InterPro" id="IPR044722">
    <property type="entry name" value="SecA_SF2_C"/>
</dbReference>
<dbReference type="InterPro" id="IPR011116">
    <property type="entry name" value="SecA_Wing/Scaffold"/>
</dbReference>
<dbReference type="InterPro" id="IPR036266">
    <property type="entry name" value="SecA_Wing/Scaffold_sf"/>
</dbReference>
<dbReference type="InterPro" id="IPR036670">
    <property type="entry name" value="SecA_X-link_sf"/>
</dbReference>
<dbReference type="NCBIfam" id="NF009538">
    <property type="entry name" value="PRK12904.1"/>
    <property type="match status" value="1"/>
</dbReference>
<dbReference type="NCBIfam" id="TIGR00963">
    <property type="entry name" value="secA"/>
    <property type="match status" value="1"/>
</dbReference>
<dbReference type="PANTHER" id="PTHR30612:SF0">
    <property type="entry name" value="CHLOROPLAST PROTEIN-TRANSPORTING ATPASE"/>
    <property type="match status" value="1"/>
</dbReference>
<dbReference type="PANTHER" id="PTHR30612">
    <property type="entry name" value="SECA INNER MEMBRANE COMPONENT OF SEC PROTEIN SECRETION SYSTEM"/>
    <property type="match status" value="1"/>
</dbReference>
<dbReference type="Pfam" id="PF21090">
    <property type="entry name" value="P-loop_SecA"/>
    <property type="match status" value="1"/>
</dbReference>
<dbReference type="Pfam" id="PF02810">
    <property type="entry name" value="SEC-C"/>
    <property type="match status" value="1"/>
</dbReference>
<dbReference type="Pfam" id="PF07517">
    <property type="entry name" value="SecA_DEAD"/>
    <property type="match status" value="1"/>
</dbReference>
<dbReference type="Pfam" id="PF01043">
    <property type="entry name" value="SecA_PP_bind"/>
    <property type="match status" value="1"/>
</dbReference>
<dbReference type="Pfam" id="PF07516">
    <property type="entry name" value="SecA_SW"/>
    <property type="match status" value="1"/>
</dbReference>
<dbReference type="PRINTS" id="PR00906">
    <property type="entry name" value="SECA"/>
</dbReference>
<dbReference type="SMART" id="SM00957">
    <property type="entry name" value="SecA_DEAD"/>
    <property type="match status" value="1"/>
</dbReference>
<dbReference type="SMART" id="SM00958">
    <property type="entry name" value="SecA_PP_bind"/>
    <property type="match status" value="1"/>
</dbReference>
<dbReference type="SUPFAM" id="SSF81886">
    <property type="entry name" value="Helical scaffold and wing domains of SecA"/>
    <property type="match status" value="1"/>
</dbReference>
<dbReference type="SUPFAM" id="SSF52540">
    <property type="entry name" value="P-loop containing nucleoside triphosphate hydrolases"/>
    <property type="match status" value="2"/>
</dbReference>
<dbReference type="SUPFAM" id="SSF81767">
    <property type="entry name" value="Pre-protein crosslinking domain of SecA"/>
    <property type="match status" value="1"/>
</dbReference>
<dbReference type="PROSITE" id="PS01312">
    <property type="entry name" value="SECA"/>
    <property type="match status" value="1"/>
</dbReference>
<dbReference type="PROSITE" id="PS51196">
    <property type="entry name" value="SECA_MOTOR_DEAD"/>
    <property type="match status" value="1"/>
</dbReference>
<gene>
    <name evidence="1" type="primary">secA</name>
    <name type="ordered locus">NGK_0792</name>
</gene>